<evidence type="ECO:0000255" key="1">
    <source>
        <dbReference type="HAMAP-Rule" id="MF_00104"/>
    </source>
</evidence>
<dbReference type="EC" id="3.1.26.3" evidence="1"/>
<dbReference type="EMBL" id="L43967">
    <property type="protein sequence ID" value="AAC71594.1"/>
    <property type="molecule type" value="Genomic_DNA"/>
</dbReference>
<dbReference type="PIR" id="F64240">
    <property type="entry name" value="F64240"/>
</dbReference>
<dbReference type="SMR" id="P47607"/>
<dbReference type="FunCoup" id="P47607">
    <property type="interactions" value="169"/>
</dbReference>
<dbReference type="STRING" id="243273.MG_367"/>
<dbReference type="KEGG" id="mge:MG_367"/>
<dbReference type="eggNOG" id="COG0571">
    <property type="taxonomic scope" value="Bacteria"/>
</dbReference>
<dbReference type="HOGENOM" id="CLU_1026084_0_0_14"/>
<dbReference type="InParanoid" id="P47607"/>
<dbReference type="Proteomes" id="UP000000807">
    <property type="component" value="Chromosome"/>
</dbReference>
<dbReference type="GO" id="GO:0005829">
    <property type="term" value="C:cytosol"/>
    <property type="evidence" value="ECO:0000318"/>
    <property type="project" value="GO_Central"/>
</dbReference>
<dbReference type="GO" id="GO:0003725">
    <property type="term" value="F:double-stranded RNA binding"/>
    <property type="evidence" value="ECO:0000318"/>
    <property type="project" value="GO_Central"/>
</dbReference>
<dbReference type="GO" id="GO:0046872">
    <property type="term" value="F:metal ion binding"/>
    <property type="evidence" value="ECO:0007669"/>
    <property type="project" value="UniProtKB-KW"/>
</dbReference>
<dbReference type="GO" id="GO:0004525">
    <property type="term" value="F:ribonuclease III activity"/>
    <property type="evidence" value="ECO:0000318"/>
    <property type="project" value="GO_Central"/>
</dbReference>
<dbReference type="GO" id="GO:0006397">
    <property type="term" value="P:mRNA processing"/>
    <property type="evidence" value="ECO:0007669"/>
    <property type="project" value="UniProtKB-UniRule"/>
</dbReference>
<dbReference type="GO" id="GO:0010468">
    <property type="term" value="P:regulation of gene expression"/>
    <property type="evidence" value="ECO:0000318"/>
    <property type="project" value="GO_Central"/>
</dbReference>
<dbReference type="GO" id="GO:0006396">
    <property type="term" value="P:RNA processing"/>
    <property type="evidence" value="ECO:0000318"/>
    <property type="project" value="GO_Central"/>
</dbReference>
<dbReference type="GO" id="GO:0006364">
    <property type="term" value="P:rRNA processing"/>
    <property type="evidence" value="ECO:0007669"/>
    <property type="project" value="UniProtKB-UniRule"/>
</dbReference>
<dbReference type="GO" id="GO:0008033">
    <property type="term" value="P:tRNA processing"/>
    <property type="evidence" value="ECO:0007669"/>
    <property type="project" value="UniProtKB-KW"/>
</dbReference>
<dbReference type="CDD" id="cd00593">
    <property type="entry name" value="RIBOc"/>
    <property type="match status" value="1"/>
</dbReference>
<dbReference type="Gene3D" id="1.10.1520.10">
    <property type="entry name" value="Ribonuclease III domain"/>
    <property type="match status" value="1"/>
</dbReference>
<dbReference type="HAMAP" id="MF_00104">
    <property type="entry name" value="RNase_III"/>
    <property type="match status" value="1"/>
</dbReference>
<dbReference type="InterPro" id="IPR011907">
    <property type="entry name" value="RNase_III"/>
</dbReference>
<dbReference type="InterPro" id="IPR000999">
    <property type="entry name" value="RNase_III_dom"/>
</dbReference>
<dbReference type="InterPro" id="IPR036389">
    <property type="entry name" value="RNase_III_sf"/>
</dbReference>
<dbReference type="NCBIfam" id="TIGR02191">
    <property type="entry name" value="RNaseIII"/>
    <property type="match status" value="1"/>
</dbReference>
<dbReference type="PANTHER" id="PTHR14950">
    <property type="entry name" value="DICER-RELATED"/>
    <property type="match status" value="1"/>
</dbReference>
<dbReference type="PANTHER" id="PTHR14950:SF37">
    <property type="entry name" value="ENDORIBONUCLEASE DICER"/>
    <property type="match status" value="1"/>
</dbReference>
<dbReference type="Pfam" id="PF14622">
    <property type="entry name" value="Ribonucleas_3_3"/>
    <property type="match status" value="1"/>
</dbReference>
<dbReference type="SMART" id="SM00535">
    <property type="entry name" value="RIBOc"/>
    <property type="match status" value="1"/>
</dbReference>
<dbReference type="SUPFAM" id="SSF69065">
    <property type="entry name" value="RNase III domain-like"/>
    <property type="match status" value="1"/>
</dbReference>
<dbReference type="PROSITE" id="PS00517">
    <property type="entry name" value="RNASE_3_1"/>
    <property type="match status" value="1"/>
</dbReference>
<dbReference type="PROSITE" id="PS50142">
    <property type="entry name" value="RNASE_3_2"/>
    <property type="match status" value="1"/>
</dbReference>
<keyword id="KW-0963">Cytoplasm</keyword>
<keyword id="KW-0255">Endonuclease</keyword>
<keyword id="KW-0378">Hydrolase</keyword>
<keyword id="KW-0460">Magnesium</keyword>
<keyword id="KW-0479">Metal-binding</keyword>
<keyword id="KW-0507">mRNA processing</keyword>
<keyword id="KW-0540">Nuclease</keyword>
<keyword id="KW-1185">Reference proteome</keyword>
<keyword id="KW-0698">rRNA processing</keyword>
<keyword id="KW-0819">tRNA processing</keyword>
<name>RNC_MYCGE</name>
<proteinExistence type="inferred from homology"/>
<reference key="1">
    <citation type="journal article" date="1995" name="Science">
        <title>The minimal gene complement of Mycoplasma genitalium.</title>
        <authorList>
            <person name="Fraser C.M."/>
            <person name="Gocayne J.D."/>
            <person name="White O."/>
            <person name="Adams M.D."/>
            <person name="Clayton R.A."/>
            <person name="Fleischmann R.D."/>
            <person name="Bult C.J."/>
            <person name="Kerlavage A.R."/>
            <person name="Sutton G.G."/>
            <person name="Kelley J.M."/>
            <person name="Fritchman J.L."/>
            <person name="Weidman J.F."/>
            <person name="Small K.V."/>
            <person name="Sandusky M."/>
            <person name="Fuhrmann J.L."/>
            <person name="Nguyen D.T."/>
            <person name="Utterback T.R."/>
            <person name="Saudek D.M."/>
            <person name="Phillips C.A."/>
            <person name="Merrick J.M."/>
            <person name="Tomb J.-F."/>
            <person name="Dougherty B.A."/>
            <person name="Bott K.F."/>
            <person name="Hu P.-C."/>
            <person name="Lucier T.S."/>
            <person name="Peterson S.N."/>
            <person name="Smith H.O."/>
            <person name="Hutchison C.A. III"/>
            <person name="Venter J.C."/>
        </authorList>
    </citation>
    <scope>NUCLEOTIDE SEQUENCE [LARGE SCALE GENOMIC DNA]</scope>
    <source>
        <strain>ATCC 33530 / DSM 19775 / NCTC 10195 / G37</strain>
    </source>
</reference>
<feature type="chain" id="PRO_0000180410" description="Ribonuclease 3">
    <location>
        <begin position="1"/>
        <end position="262"/>
    </location>
</feature>
<feature type="domain" description="RNase III" evidence="1">
    <location>
        <begin position="18"/>
        <end position="141"/>
    </location>
</feature>
<feature type="active site" evidence="1">
    <location>
        <position position="63"/>
    </location>
</feature>
<feature type="active site" evidence="1">
    <location>
        <position position="130"/>
    </location>
</feature>
<feature type="binding site" evidence="1">
    <location>
        <position position="59"/>
    </location>
    <ligand>
        <name>Mg(2+)</name>
        <dbReference type="ChEBI" id="CHEBI:18420"/>
    </ligand>
</feature>
<feature type="binding site" evidence="1">
    <location>
        <position position="127"/>
    </location>
    <ligand>
        <name>Mg(2+)</name>
        <dbReference type="ChEBI" id="CHEBI:18420"/>
    </ligand>
</feature>
<feature type="binding site" evidence="1">
    <location>
        <position position="130"/>
    </location>
    <ligand>
        <name>Mg(2+)</name>
        <dbReference type="ChEBI" id="CHEBI:18420"/>
    </ligand>
</feature>
<sequence length="262" mass="30338">MKNKVLKLKNNKIFDKKLATFLKNLDIFPNNWEFFEKAFIHASYINEHEDVSESYDRLEFLGDALIDFVVAKKLFELYPKYNEGLLTRTKIEIVKGENLNRIGMELKLGDFVKLSNGAELTENTVGDVLEALVGAIYEDMGMKKATEFVEKYIFERTFSEILKYDFFSLFQEQKLPEPRVRVSLTSNNLVLSIIELDGDIIWSQAIPNNKNYDDKSVLEHNAMASFTSFLKSSKGSHFFSDLKEKIENQKMCKKLAIKPKKN</sequence>
<gene>
    <name evidence="1" type="primary">rnc</name>
    <name type="ordered locus">MG367</name>
</gene>
<comment type="function">
    <text evidence="1">Digests double-stranded RNA. Involved in the processing of primary rRNA transcript to yield the immediate precursors to the large and small rRNAs (23S and 16S). Processes some mRNAs, and tRNAs when they are encoded in the rRNA operon. Processes pre-crRNA and tracrRNA of type II CRISPR loci if present in the organism.</text>
</comment>
<comment type="catalytic activity">
    <reaction evidence="1">
        <text>Endonucleolytic cleavage to 5'-phosphomonoester.</text>
        <dbReference type="EC" id="3.1.26.3"/>
    </reaction>
</comment>
<comment type="cofactor">
    <cofactor evidence="1">
        <name>Mg(2+)</name>
        <dbReference type="ChEBI" id="CHEBI:18420"/>
    </cofactor>
</comment>
<comment type="subunit">
    <text evidence="1">Homodimer.</text>
</comment>
<comment type="subcellular location">
    <subcellularLocation>
        <location evidence="1">Cytoplasm</location>
    </subcellularLocation>
</comment>
<comment type="similarity">
    <text evidence="1">Belongs to the ribonuclease III family.</text>
</comment>
<organism>
    <name type="scientific">Mycoplasma genitalium (strain ATCC 33530 / DSM 19775 / NCTC 10195 / G37)</name>
    <name type="common">Mycoplasmoides genitalium</name>
    <dbReference type="NCBI Taxonomy" id="243273"/>
    <lineage>
        <taxon>Bacteria</taxon>
        <taxon>Bacillati</taxon>
        <taxon>Mycoplasmatota</taxon>
        <taxon>Mycoplasmoidales</taxon>
        <taxon>Mycoplasmoidaceae</taxon>
        <taxon>Mycoplasmoides</taxon>
    </lineage>
</organism>
<protein>
    <recommendedName>
        <fullName evidence="1">Ribonuclease 3</fullName>
        <ecNumber evidence="1">3.1.26.3</ecNumber>
    </recommendedName>
    <alternativeName>
        <fullName evidence="1">Ribonuclease III</fullName>
        <shortName evidence="1">RNase III</shortName>
    </alternativeName>
</protein>
<accession>P47607</accession>